<keyword id="KW-0067">ATP-binding</keyword>
<keyword id="KW-0436">Ligase</keyword>
<keyword id="KW-0460">Magnesium</keyword>
<keyword id="KW-0464">Manganese</keyword>
<keyword id="KW-0479">Metal-binding</keyword>
<keyword id="KW-0547">Nucleotide-binding</keyword>
<keyword id="KW-0648">Protein biosynthesis</keyword>
<reference key="1">
    <citation type="submission" date="2007-11" db="EMBL/GenBank/DDBJ databases">
        <authorList>
            <consortium name="The Salmonella enterica serovar Paratyphi B Genome Sequencing Project"/>
            <person name="McClelland M."/>
            <person name="Sanderson E.K."/>
            <person name="Porwollik S."/>
            <person name="Spieth J."/>
            <person name="Clifton W.S."/>
            <person name="Fulton R."/>
            <person name="Cordes M."/>
            <person name="Wollam A."/>
            <person name="Shah N."/>
            <person name="Pepin K."/>
            <person name="Bhonagiri V."/>
            <person name="Nash W."/>
            <person name="Johnson M."/>
            <person name="Thiruvilangam P."/>
            <person name="Wilson R."/>
        </authorList>
    </citation>
    <scope>NUCLEOTIDE SEQUENCE [LARGE SCALE GENOMIC DNA]</scope>
    <source>
        <strain>ATCC BAA-1250 / SPB7</strain>
    </source>
</reference>
<dbReference type="EC" id="6.3.2.-" evidence="1"/>
<dbReference type="EMBL" id="CP000886">
    <property type="protein sequence ID" value="ABX67993.1"/>
    <property type="molecule type" value="Genomic_DNA"/>
</dbReference>
<dbReference type="RefSeq" id="WP_000684361.1">
    <property type="nucleotide sequence ID" value="NC_010102.1"/>
</dbReference>
<dbReference type="SMR" id="A9MSM9"/>
<dbReference type="KEGG" id="spq:SPAB_02614"/>
<dbReference type="PATRIC" id="fig|1016998.12.peg.2473"/>
<dbReference type="HOGENOM" id="CLU_054353_0_1_6"/>
<dbReference type="BioCyc" id="SENT1016998:SPAB_RS10640-MONOMER"/>
<dbReference type="Proteomes" id="UP000008556">
    <property type="component" value="Chromosome"/>
</dbReference>
<dbReference type="GO" id="GO:0005737">
    <property type="term" value="C:cytoplasm"/>
    <property type="evidence" value="ECO:0007669"/>
    <property type="project" value="TreeGrafter"/>
</dbReference>
<dbReference type="GO" id="GO:0005524">
    <property type="term" value="F:ATP binding"/>
    <property type="evidence" value="ECO:0007669"/>
    <property type="project" value="UniProtKB-UniRule"/>
</dbReference>
<dbReference type="GO" id="GO:0046872">
    <property type="term" value="F:metal ion binding"/>
    <property type="evidence" value="ECO:0007669"/>
    <property type="project" value="UniProtKB-KW"/>
</dbReference>
<dbReference type="GO" id="GO:0018169">
    <property type="term" value="F:ribosomal S6-glutamic acid ligase activity"/>
    <property type="evidence" value="ECO:0007669"/>
    <property type="project" value="UniProtKB-UniRule"/>
</dbReference>
<dbReference type="GO" id="GO:0036211">
    <property type="term" value="P:protein modification process"/>
    <property type="evidence" value="ECO:0007669"/>
    <property type="project" value="InterPro"/>
</dbReference>
<dbReference type="GO" id="GO:0009432">
    <property type="term" value="P:SOS response"/>
    <property type="evidence" value="ECO:0007669"/>
    <property type="project" value="TreeGrafter"/>
</dbReference>
<dbReference type="GO" id="GO:0006412">
    <property type="term" value="P:translation"/>
    <property type="evidence" value="ECO:0007669"/>
    <property type="project" value="UniProtKB-KW"/>
</dbReference>
<dbReference type="FunFam" id="3.40.50.20:FF:000004">
    <property type="entry name" value="Probable alpha-L-glutamate ligase"/>
    <property type="match status" value="1"/>
</dbReference>
<dbReference type="FunFam" id="3.30.1490.20:FF:000005">
    <property type="entry name" value="Probable alpha-L-glutamate ligase 1"/>
    <property type="match status" value="1"/>
</dbReference>
<dbReference type="FunFam" id="3.30.470.20:FF:000016">
    <property type="entry name" value="Ribosomal protein S6--L-glutamate ligase"/>
    <property type="match status" value="1"/>
</dbReference>
<dbReference type="Gene3D" id="3.40.50.20">
    <property type="match status" value="1"/>
</dbReference>
<dbReference type="Gene3D" id="3.30.1490.20">
    <property type="entry name" value="ATP-grasp fold, A domain"/>
    <property type="match status" value="1"/>
</dbReference>
<dbReference type="Gene3D" id="3.30.470.20">
    <property type="entry name" value="ATP-grasp fold, B domain"/>
    <property type="match status" value="1"/>
</dbReference>
<dbReference type="HAMAP" id="MF_01552">
    <property type="entry name" value="RimK"/>
    <property type="match status" value="1"/>
</dbReference>
<dbReference type="InterPro" id="IPR011761">
    <property type="entry name" value="ATP-grasp"/>
</dbReference>
<dbReference type="InterPro" id="IPR013651">
    <property type="entry name" value="ATP-grasp_RimK-type"/>
</dbReference>
<dbReference type="InterPro" id="IPR013815">
    <property type="entry name" value="ATP_grasp_subdomain_1"/>
</dbReference>
<dbReference type="InterPro" id="IPR023533">
    <property type="entry name" value="RimK"/>
</dbReference>
<dbReference type="InterPro" id="IPR041107">
    <property type="entry name" value="Rimk_N"/>
</dbReference>
<dbReference type="InterPro" id="IPR004666">
    <property type="entry name" value="Rp_bS6_RimK/Lys_biosynth_LsyX"/>
</dbReference>
<dbReference type="NCBIfam" id="NF007764">
    <property type="entry name" value="PRK10446.1"/>
    <property type="match status" value="1"/>
</dbReference>
<dbReference type="NCBIfam" id="TIGR00768">
    <property type="entry name" value="rimK_fam"/>
    <property type="match status" value="1"/>
</dbReference>
<dbReference type="PANTHER" id="PTHR21621:SF7">
    <property type="entry name" value="RIBOSOMAL PROTEIN BS6--L-GLUTAMATE LIGASE"/>
    <property type="match status" value="1"/>
</dbReference>
<dbReference type="PANTHER" id="PTHR21621">
    <property type="entry name" value="RIBOSOMAL PROTEIN S6 MODIFICATION PROTEIN"/>
    <property type="match status" value="1"/>
</dbReference>
<dbReference type="Pfam" id="PF08443">
    <property type="entry name" value="RimK"/>
    <property type="match status" value="1"/>
</dbReference>
<dbReference type="Pfam" id="PF18030">
    <property type="entry name" value="Rimk_N"/>
    <property type="match status" value="1"/>
</dbReference>
<dbReference type="SUPFAM" id="SSF56059">
    <property type="entry name" value="Glutathione synthetase ATP-binding domain-like"/>
    <property type="match status" value="1"/>
</dbReference>
<dbReference type="PROSITE" id="PS50975">
    <property type="entry name" value="ATP_GRASP"/>
    <property type="match status" value="1"/>
</dbReference>
<name>RIMK_SALPB</name>
<protein>
    <recommendedName>
        <fullName evidence="1">Ribosomal protein bS6--L-glutamate ligase</fullName>
        <ecNumber evidence="1">6.3.2.-</ecNumber>
    </recommendedName>
    <alternativeName>
        <fullName evidence="1">Poly-alpha-glutamate synthase</fullName>
    </alternativeName>
    <alternativeName>
        <fullName evidence="1">Ribosomal protein bS6 modification protein</fullName>
    </alternativeName>
</protein>
<organism>
    <name type="scientific">Salmonella paratyphi B (strain ATCC BAA-1250 / SPB7)</name>
    <dbReference type="NCBI Taxonomy" id="1016998"/>
    <lineage>
        <taxon>Bacteria</taxon>
        <taxon>Pseudomonadati</taxon>
        <taxon>Pseudomonadota</taxon>
        <taxon>Gammaproteobacteria</taxon>
        <taxon>Enterobacterales</taxon>
        <taxon>Enterobacteriaceae</taxon>
        <taxon>Salmonella</taxon>
    </lineage>
</organism>
<accession>A9MSM9</accession>
<feature type="chain" id="PRO_1000087750" description="Ribosomal protein bS6--L-glutamate ligase">
    <location>
        <begin position="1"/>
        <end position="300"/>
    </location>
</feature>
<feature type="domain" description="ATP-grasp" evidence="1">
    <location>
        <begin position="104"/>
        <end position="287"/>
    </location>
</feature>
<feature type="binding site" evidence="1">
    <location>
        <position position="141"/>
    </location>
    <ligand>
        <name>ATP</name>
        <dbReference type="ChEBI" id="CHEBI:30616"/>
    </ligand>
</feature>
<feature type="binding site" evidence="1">
    <location>
        <begin position="178"/>
        <end position="179"/>
    </location>
    <ligand>
        <name>ATP</name>
        <dbReference type="ChEBI" id="CHEBI:30616"/>
    </ligand>
</feature>
<feature type="binding site" evidence="1">
    <location>
        <position position="187"/>
    </location>
    <ligand>
        <name>ATP</name>
        <dbReference type="ChEBI" id="CHEBI:30616"/>
    </ligand>
</feature>
<feature type="binding site" evidence="1">
    <location>
        <begin position="211"/>
        <end position="213"/>
    </location>
    <ligand>
        <name>ATP</name>
        <dbReference type="ChEBI" id="CHEBI:30616"/>
    </ligand>
</feature>
<feature type="binding site" evidence="1">
    <location>
        <position position="248"/>
    </location>
    <ligand>
        <name>Mg(2+)</name>
        <dbReference type="ChEBI" id="CHEBI:18420"/>
        <label>1</label>
    </ligand>
</feature>
<feature type="binding site" evidence="1">
    <location>
        <position position="248"/>
    </location>
    <ligand>
        <name>Mn(2+)</name>
        <dbReference type="ChEBI" id="CHEBI:29035"/>
        <label>1</label>
    </ligand>
</feature>
<feature type="binding site" evidence="1">
    <location>
        <position position="260"/>
    </location>
    <ligand>
        <name>Mg(2+)</name>
        <dbReference type="ChEBI" id="CHEBI:18420"/>
        <label>1</label>
    </ligand>
</feature>
<feature type="binding site" evidence="1">
    <location>
        <position position="260"/>
    </location>
    <ligand>
        <name>Mg(2+)</name>
        <dbReference type="ChEBI" id="CHEBI:18420"/>
        <label>2</label>
    </ligand>
</feature>
<feature type="binding site" evidence="1">
    <location>
        <position position="260"/>
    </location>
    <ligand>
        <name>Mn(2+)</name>
        <dbReference type="ChEBI" id="CHEBI:29035"/>
        <label>1</label>
    </ligand>
</feature>
<feature type="binding site" evidence="1">
    <location>
        <position position="260"/>
    </location>
    <ligand>
        <name>Mn(2+)</name>
        <dbReference type="ChEBI" id="CHEBI:29035"/>
        <label>2</label>
    </ligand>
</feature>
<feature type="binding site" evidence="1">
    <location>
        <position position="262"/>
    </location>
    <ligand>
        <name>Mg(2+)</name>
        <dbReference type="ChEBI" id="CHEBI:18420"/>
        <label>2</label>
    </ligand>
</feature>
<feature type="binding site" evidence="1">
    <location>
        <position position="262"/>
    </location>
    <ligand>
        <name>Mn(2+)</name>
        <dbReference type="ChEBI" id="CHEBI:29035"/>
        <label>2</label>
    </ligand>
</feature>
<proteinExistence type="inferred from homology"/>
<gene>
    <name evidence="1" type="primary">rimK</name>
    <name type="ordered locus">SPAB_02614</name>
</gene>
<comment type="function">
    <text evidence="1">An L-glutamate ligase that catalyzes the ATP-dependent post-translational addition of glutamate residues to the C-terminus of ribosomal protein bS6 (RpsF). Is also able to catalyze the synthesis of poly-alpha-glutamate in vitro, via ATP hydrolysis from unprotected glutamate as substrate. The number of glutamate residues added to either RpsF or to poly-alpha-glutamate changes with pH.</text>
</comment>
<comment type="cofactor">
    <cofactor evidence="1">
        <name>Mg(2+)</name>
        <dbReference type="ChEBI" id="CHEBI:18420"/>
    </cofactor>
    <cofactor evidence="1">
        <name>Mn(2+)</name>
        <dbReference type="ChEBI" id="CHEBI:29035"/>
    </cofactor>
    <text evidence="1">Binds 2 magnesium or manganese ions per subunit.</text>
</comment>
<comment type="similarity">
    <text evidence="1">Belongs to the RimK family.</text>
</comment>
<sequence>MKIAILSRDGTLYSCKRLREAAMRRGHLVEILDPLSCYMNINPAASSIHYKGRRLPHFDAVIPRIGSAITFYGTAALRQFELLGSYPLNESVAITRARDKLRSLQLLARQGIDLPITGIAHSPDDTSDLIKMVGGAPLVVKLVEGTQGIGVVLAETRQAAESVIDAFRGLNAHILVQEYIAEAKGCDIRCLVVGNEVVAAIERCAKAGDFRSNLHRGGVASIATITPRERDIAIKAAQTLGLDVAGVDILRAARGPLVMEVNASPGLEGIEKTTGVDIAGRMIQWIERHATPEFCLKIGG</sequence>
<evidence type="ECO:0000255" key="1">
    <source>
        <dbReference type="HAMAP-Rule" id="MF_01552"/>
    </source>
</evidence>